<dbReference type="EMBL" id="AF173166">
    <property type="protein sequence ID" value="AAF19795.1"/>
    <property type="molecule type" value="mRNA"/>
</dbReference>
<dbReference type="EMBL" id="AF167552">
    <property type="protein sequence ID" value="AAF71825.1"/>
    <property type="molecule type" value="mRNA"/>
</dbReference>
<dbReference type="EMBL" id="AF167554">
    <property type="protein sequence ID" value="AAF71827.1"/>
    <property type="molecule type" value="mRNA"/>
</dbReference>
<dbReference type="EMBL" id="AF167553">
    <property type="protein sequence ID" value="AAF71826.1"/>
    <property type="molecule type" value="mRNA"/>
</dbReference>
<dbReference type="EMBL" id="AB040432">
    <property type="protein sequence ID" value="BAB03267.1"/>
    <property type="molecule type" value="mRNA"/>
</dbReference>
<dbReference type="EMBL" id="AB040433">
    <property type="protein sequence ID" value="BAB03268.1"/>
    <property type="molecule type" value="mRNA"/>
</dbReference>
<dbReference type="EMBL" id="AF247000">
    <property type="protein sequence ID" value="AAK28397.1"/>
    <property type="molecule type" value="mRNA"/>
</dbReference>
<dbReference type="EMBL" id="AK028146">
    <property type="protein sequence ID" value="BAC25774.1"/>
    <property type="molecule type" value="mRNA"/>
</dbReference>
<dbReference type="EMBL" id="BC030062">
    <property type="protein sequence ID" value="AAH30062.1"/>
    <property type="molecule type" value="mRNA"/>
</dbReference>
<dbReference type="CCDS" id="CCDS36941.1">
    <molecule id="Q9JLL3-1"/>
</dbReference>
<dbReference type="RefSeq" id="NP_001157627.1">
    <molecule id="Q9JLL3-1"/>
    <property type="nucleotide sequence ID" value="NM_001164155.1"/>
</dbReference>
<dbReference type="RefSeq" id="NP_038897.4">
    <molecule id="Q9JLL3-1"/>
    <property type="nucleotide sequence ID" value="NM_013869.5"/>
</dbReference>
<dbReference type="BioGRID" id="205900">
    <property type="interactions" value="1"/>
</dbReference>
<dbReference type="CORUM" id="Q9JLL3"/>
<dbReference type="FunCoup" id="Q9JLL3">
    <property type="interactions" value="1244"/>
</dbReference>
<dbReference type="IntAct" id="Q9JLL3">
    <property type="interactions" value="2"/>
</dbReference>
<dbReference type="MINT" id="Q9JLL3"/>
<dbReference type="STRING" id="10090.ENSMUSP00000106865"/>
<dbReference type="GlyCosmos" id="Q9JLL3">
    <property type="glycosylation" value="1 site, No reported glycans"/>
</dbReference>
<dbReference type="GlyGen" id="Q9JLL3">
    <property type="glycosylation" value="2 sites, 2 N-linked glycans (2 sites)"/>
</dbReference>
<dbReference type="PhosphoSitePlus" id="Q9JLL3"/>
<dbReference type="PaxDb" id="10090-ENSMUSP00000106865"/>
<dbReference type="ProteomicsDB" id="260638">
    <molecule id="Q9JLL3-1"/>
</dbReference>
<dbReference type="ProteomicsDB" id="260640">
    <molecule id="Q9JLL3-3"/>
</dbReference>
<dbReference type="ProteomicsDB" id="260641">
    <molecule id="Q9JLL3-4"/>
</dbReference>
<dbReference type="ABCD" id="Q9JLL3">
    <property type="antibodies" value="1 sequenced antibody"/>
</dbReference>
<dbReference type="Antibodypedia" id="2432">
    <property type="antibodies" value="375 antibodies from 34 providers"/>
</dbReference>
<dbReference type="DNASU" id="29820"/>
<dbReference type="Ensembl" id="ENSMUST00000111234.10">
    <molecule id="Q9JLL3-1"/>
    <property type="protein sequence ID" value="ENSMUSP00000106865.3"/>
    <property type="gene ID" value="ENSMUSG00000060548.14"/>
</dbReference>
<dbReference type="Ensembl" id="ENSMUST00000111236.4">
    <molecule id="Q9JLL3-1"/>
    <property type="protein sequence ID" value="ENSMUSP00000106867.3"/>
    <property type="gene ID" value="ENSMUSG00000060548.14"/>
</dbReference>
<dbReference type="Ensembl" id="ENSMUST00000224371.2">
    <molecule id="Q9JLL3-3"/>
    <property type="protein sequence ID" value="ENSMUSP00000153577.2"/>
    <property type="gene ID" value="ENSMUSG00000060548.14"/>
</dbReference>
<dbReference type="Ensembl" id="ENSMUST00000225730.2">
    <molecule id="Q9JLL3-3"/>
    <property type="protein sequence ID" value="ENSMUSP00000152920.2"/>
    <property type="gene ID" value="ENSMUSG00000060548.14"/>
</dbReference>
<dbReference type="GeneID" id="29820"/>
<dbReference type="KEGG" id="mmu:29820"/>
<dbReference type="UCSC" id="uc007ufi.2">
    <molecule id="Q9JLL3-1"/>
    <property type="organism name" value="mouse"/>
</dbReference>
<dbReference type="UCSC" id="uc007ufl.2">
    <molecule id="Q9JLL3-3"/>
    <property type="organism name" value="mouse"/>
</dbReference>
<dbReference type="UCSC" id="uc007ufn.2">
    <molecule id="Q9JLL3-2"/>
    <property type="organism name" value="mouse"/>
</dbReference>
<dbReference type="AGR" id="MGI:1352474"/>
<dbReference type="CTD" id="55504"/>
<dbReference type="MGI" id="MGI:1352474">
    <property type="gene designation" value="Tnfrsf19"/>
</dbReference>
<dbReference type="VEuPathDB" id="HostDB:ENSMUSG00000060548"/>
<dbReference type="eggNOG" id="ENOG502QQHI">
    <property type="taxonomic scope" value="Eukaryota"/>
</dbReference>
<dbReference type="GeneTree" id="ENSGT00940000153259"/>
<dbReference type="HOGENOM" id="CLU_050058_0_0_1"/>
<dbReference type="InParanoid" id="Q9JLL3"/>
<dbReference type="OMA" id="KTKCNGT"/>
<dbReference type="OrthoDB" id="10017617at2759"/>
<dbReference type="PhylomeDB" id="Q9JLL3"/>
<dbReference type="TreeFam" id="TF331385"/>
<dbReference type="BioGRID-ORCS" id="29820">
    <property type="hits" value="2 hits in 77 CRISPR screens"/>
</dbReference>
<dbReference type="ChiTaRS" id="Tnfrsf19">
    <property type="organism name" value="mouse"/>
</dbReference>
<dbReference type="PRO" id="PR:Q9JLL3"/>
<dbReference type="Proteomes" id="UP000000589">
    <property type="component" value="Chromosome 14"/>
</dbReference>
<dbReference type="RNAct" id="Q9JLL3">
    <property type="molecule type" value="protein"/>
</dbReference>
<dbReference type="Bgee" id="ENSMUSG00000060548">
    <property type="expression patterns" value="Expressed in presomitic mesoderm and 281 other cell types or tissues"/>
</dbReference>
<dbReference type="GO" id="GO:0005576">
    <property type="term" value="C:extracellular region"/>
    <property type="evidence" value="ECO:0007669"/>
    <property type="project" value="UniProtKB-SubCell"/>
</dbReference>
<dbReference type="GO" id="GO:0005886">
    <property type="term" value="C:plasma membrane"/>
    <property type="evidence" value="ECO:0007669"/>
    <property type="project" value="UniProtKB-SubCell"/>
</dbReference>
<dbReference type="GO" id="GO:0038023">
    <property type="term" value="F:signaling receptor activity"/>
    <property type="evidence" value="ECO:0007669"/>
    <property type="project" value="InterPro"/>
</dbReference>
<dbReference type="GO" id="GO:0001942">
    <property type="term" value="P:hair follicle development"/>
    <property type="evidence" value="ECO:0000316"/>
    <property type="project" value="MGI"/>
</dbReference>
<dbReference type="GO" id="GO:0043123">
    <property type="term" value="P:positive regulation of canonical NF-kappaB signal transduction"/>
    <property type="evidence" value="ECO:0000314"/>
    <property type="project" value="MGI"/>
</dbReference>
<dbReference type="GO" id="GO:0046330">
    <property type="term" value="P:positive regulation of JNK cascade"/>
    <property type="evidence" value="ECO:0007669"/>
    <property type="project" value="InterPro"/>
</dbReference>
<dbReference type="CDD" id="cd13418">
    <property type="entry name" value="TNFRSF19"/>
    <property type="match status" value="1"/>
</dbReference>
<dbReference type="FunFam" id="2.10.50.10:FF:000003">
    <property type="entry name" value="Tumor necrosis factor receptor superfamily member 19"/>
    <property type="match status" value="1"/>
</dbReference>
<dbReference type="Gene3D" id="2.10.50.10">
    <property type="entry name" value="Tumor Necrosis Factor Receptor, subunit A, domain 2"/>
    <property type="match status" value="1"/>
</dbReference>
<dbReference type="InterPro" id="IPR001368">
    <property type="entry name" value="TNFR/NGFR_Cys_rich_reg"/>
</dbReference>
<dbReference type="InterPro" id="IPR022342">
    <property type="entry name" value="TNFR_19"/>
</dbReference>
<dbReference type="InterPro" id="IPR034047">
    <property type="entry name" value="TNFRSF19_N"/>
</dbReference>
<dbReference type="InterPro" id="IPR047526">
    <property type="entry name" value="TNR19/27/EDAR"/>
</dbReference>
<dbReference type="PANTHER" id="PTHR12120">
    <property type="entry name" value="TNFR-CYS DOMAIN-CONTAINING PROTEIN"/>
    <property type="match status" value="1"/>
</dbReference>
<dbReference type="PANTHER" id="PTHR12120:SF1">
    <property type="entry name" value="TUMOR NECROSIS FACTOR RECEPTOR SUPERFAMILY MEMBER 19"/>
    <property type="match status" value="1"/>
</dbReference>
<dbReference type="Pfam" id="PF00020">
    <property type="entry name" value="TNFR_c6"/>
    <property type="match status" value="1"/>
</dbReference>
<dbReference type="PRINTS" id="PR01969">
    <property type="entry name" value="TNFACTORR19"/>
</dbReference>
<dbReference type="SMART" id="SM00208">
    <property type="entry name" value="TNFR"/>
    <property type="match status" value="2"/>
</dbReference>
<dbReference type="PROSITE" id="PS00652">
    <property type="entry name" value="TNFR_NGFR_1"/>
    <property type="match status" value="2"/>
</dbReference>
<dbReference type="PROSITE" id="PS50050">
    <property type="entry name" value="TNFR_NGFR_2"/>
    <property type="match status" value="1"/>
</dbReference>
<organism>
    <name type="scientific">Mus musculus</name>
    <name type="common">Mouse</name>
    <dbReference type="NCBI Taxonomy" id="10090"/>
    <lineage>
        <taxon>Eukaryota</taxon>
        <taxon>Metazoa</taxon>
        <taxon>Chordata</taxon>
        <taxon>Craniata</taxon>
        <taxon>Vertebrata</taxon>
        <taxon>Euteleostomi</taxon>
        <taxon>Mammalia</taxon>
        <taxon>Eutheria</taxon>
        <taxon>Euarchontoglires</taxon>
        <taxon>Glires</taxon>
        <taxon>Rodentia</taxon>
        <taxon>Myomorpha</taxon>
        <taxon>Muroidea</taxon>
        <taxon>Muridae</taxon>
        <taxon>Murinae</taxon>
        <taxon>Mus</taxon>
        <taxon>Mus</taxon>
    </lineage>
</organism>
<proteinExistence type="evidence at protein level"/>
<evidence type="ECO:0000250" key="1"/>
<evidence type="ECO:0000255" key="2"/>
<evidence type="ECO:0000255" key="3">
    <source>
        <dbReference type="PROSITE-ProRule" id="PRU00206"/>
    </source>
</evidence>
<evidence type="ECO:0000256" key="4">
    <source>
        <dbReference type="SAM" id="MobiDB-lite"/>
    </source>
</evidence>
<evidence type="ECO:0000303" key="5">
    <source>
    </source>
</evidence>
<evidence type="ECO:0000303" key="6">
    <source>
    </source>
</evidence>
<evidence type="ECO:0000303" key="7">
    <source>
    </source>
</evidence>
<evidence type="ECO:0000303" key="8">
    <source>
    </source>
</evidence>
<evidence type="ECO:0000305" key="9"/>
<reference key="1">
    <citation type="journal article" date="1999" name="Genomics">
        <title>Characterization of TNFRSF19, a novel member of the tumor necrosis factor receptor superfamily.</title>
        <authorList>
            <person name="Hu S."/>
            <person name="Tamada K."/>
            <person name="Ni J."/>
            <person name="Vincenz C."/>
            <person name="Chen L."/>
        </authorList>
    </citation>
    <scope>NUCLEOTIDE SEQUENCE [MRNA] (ISOFORM 4)</scope>
</reference>
<reference key="2">
    <citation type="journal article" date="2000" name="J. Biol. Chem.">
        <title>TAJ, a novel member of the tumor necrosis factor receptor family, activates the c-Jun N-terminal kinase pathway and mediates caspase-independent cell death.</title>
        <authorList>
            <person name="Eby M.T."/>
            <person name="Jasmin A."/>
            <person name="Kumar A."/>
            <person name="Sharma K."/>
            <person name="Chaudhary P.M."/>
        </authorList>
    </citation>
    <scope>NUCLEOTIDE SEQUENCE [MRNA] (ISOFORMS 1; 2 AND 3)</scope>
    <source>
        <tissue>Embryo</tissue>
        <tissue>Spleen</tissue>
    </source>
</reference>
<reference key="3">
    <citation type="journal article" date="2000" name="J. Biol. Chem.">
        <title>TROY, a newly identified member of the tumor necrosis factor receptor superfamily, exhibits a homology with Edar and is expressed in embryonic skin and hair follicles.</title>
        <authorList>
            <person name="Kojima T."/>
            <person name="Morikawa Y."/>
            <person name="Copeland N.G."/>
            <person name="Gilbert D.J."/>
            <person name="Jenkins N.A."/>
            <person name="Senba E."/>
            <person name="Kitamura T."/>
        </authorList>
    </citation>
    <scope>NUCLEOTIDE SEQUENCE [MRNA] (ISOFORMS 1 AND 3)</scope>
    <source>
        <tissue>Brain</tissue>
    </source>
</reference>
<reference key="4">
    <citation type="submission" date="2000-03" db="EMBL/GenBank/DDBJ databases">
        <title>TRADE, a novel TNF receptor family member associated with death signaling.</title>
        <authorList>
            <person name="Chaudhary D."/>
            <person name="Long A.J."/>
        </authorList>
    </citation>
    <scope>NUCLEOTIDE SEQUENCE [MRNA] (ISOFORM 1)</scope>
    <source>
        <strain>C57BL/6J</strain>
    </source>
</reference>
<reference key="5">
    <citation type="journal article" date="2005" name="Science">
        <title>The transcriptional landscape of the mammalian genome.</title>
        <authorList>
            <person name="Carninci P."/>
            <person name="Kasukawa T."/>
            <person name="Katayama S."/>
            <person name="Gough J."/>
            <person name="Frith M.C."/>
            <person name="Maeda N."/>
            <person name="Oyama R."/>
            <person name="Ravasi T."/>
            <person name="Lenhard B."/>
            <person name="Wells C."/>
            <person name="Kodzius R."/>
            <person name="Shimokawa K."/>
            <person name="Bajic V.B."/>
            <person name="Brenner S.E."/>
            <person name="Batalov S."/>
            <person name="Forrest A.R."/>
            <person name="Zavolan M."/>
            <person name="Davis M.J."/>
            <person name="Wilming L.G."/>
            <person name="Aidinis V."/>
            <person name="Allen J.E."/>
            <person name="Ambesi-Impiombato A."/>
            <person name="Apweiler R."/>
            <person name="Aturaliya R.N."/>
            <person name="Bailey T.L."/>
            <person name="Bansal M."/>
            <person name="Baxter L."/>
            <person name="Beisel K.W."/>
            <person name="Bersano T."/>
            <person name="Bono H."/>
            <person name="Chalk A.M."/>
            <person name="Chiu K.P."/>
            <person name="Choudhary V."/>
            <person name="Christoffels A."/>
            <person name="Clutterbuck D.R."/>
            <person name="Crowe M.L."/>
            <person name="Dalla E."/>
            <person name="Dalrymple B.P."/>
            <person name="de Bono B."/>
            <person name="Della Gatta G."/>
            <person name="di Bernardo D."/>
            <person name="Down T."/>
            <person name="Engstrom P."/>
            <person name="Fagiolini M."/>
            <person name="Faulkner G."/>
            <person name="Fletcher C.F."/>
            <person name="Fukushima T."/>
            <person name="Furuno M."/>
            <person name="Futaki S."/>
            <person name="Gariboldi M."/>
            <person name="Georgii-Hemming P."/>
            <person name="Gingeras T.R."/>
            <person name="Gojobori T."/>
            <person name="Green R.E."/>
            <person name="Gustincich S."/>
            <person name="Harbers M."/>
            <person name="Hayashi Y."/>
            <person name="Hensch T.K."/>
            <person name="Hirokawa N."/>
            <person name="Hill D."/>
            <person name="Huminiecki L."/>
            <person name="Iacono M."/>
            <person name="Ikeo K."/>
            <person name="Iwama A."/>
            <person name="Ishikawa T."/>
            <person name="Jakt M."/>
            <person name="Kanapin A."/>
            <person name="Katoh M."/>
            <person name="Kawasawa Y."/>
            <person name="Kelso J."/>
            <person name="Kitamura H."/>
            <person name="Kitano H."/>
            <person name="Kollias G."/>
            <person name="Krishnan S.P."/>
            <person name="Kruger A."/>
            <person name="Kummerfeld S.K."/>
            <person name="Kurochkin I.V."/>
            <person name="Lareau L.F."/>
            <person name="Lazarevic D."/>
            <person name="Lipovich L."/>
            <person name="Liu J."/>
            <person name="Liuni S."/>
            <person name="McWilliam S."/>
            <person name="Madan Babu M."/>
            <person name="Madera M."/>
            <person name="Marchionni L."/>
            <person name="Matsuda H."/>
            <person name="Matsuzawa S."/>
            <person name="Miki H."/>
            <person name="Mignone F."/>
            <person name="Miyake S."/>
            <person name="Morris K."/>
            <person name="Mottagui-Tabar S."/>
            <person name="Mulder N."/>
            <person name="Nakano N."/>
            <person name="Nakauchi H."/>
            <person name="Ng P."/>
            <person name="Nilsson R."/>
            <person name="Nishiguchi S."/>
            <person name="Nishikawa S."/>
            <person name="Nori F."/>
            <person name="Ohara O."/>
            <person name="Okazaki Y."/>
            <person name="Orlando V."/>
            <person name="Pang K.C."/>
            <person name="Pavan W.J."/>
            <person name="Pavesi G."/>
            <person name="Pesole G."/>
            <person name="Petrovsky N."/>
            <person name="Piazza S."/>
            <person name="Reed J."/>
            <person name="Reid J.F."/>
            <person name="Ring B.Z."/>
            <person name="Ringwald M."/>
            <person name="Rost B."/>
            <person name="Ruan Y."/>
            <person name="Salzberg S.L."/>
            <person name="Sandelin A."/>
            <person name="Schneider C."/>
            <person name="Schoenbach C."/>
            <person name="Sekiguchi K."/>
            <person name="Semple C.A."/>
            <person name="Seno S."/>
            <person name="Sessa L."/>
            <person name="Sheng Y."/>
            <person name="Shibata Y."/>
            <person name="Shimada H."/>
            <person name="Shimada K."/>
            <person name="Silva D."/>
            <person name="Sinclair B."/>
            <person name="Sperling S."/>
            <person name="Stupka E."/>
            <person name="Sugiura K."/>
            <person name="Sultana R."/>
            <person name="Takenaka Y."/>
            <person name="Taki K."/>
            <person name="Tammoja K."/>
            <person name="Tan S.L."/>
            <person name="Tang S."/>
            <person name="Taylor M.S."/>
            <person name="Tegner J."/>
            <person name="Teichmann S.A."/>
            <person name="Ueda H.R."/>
            <person name="van Nimwegen E."/>
            <person name="Verardo R."/>
            <person name="Wei C.L."/>
            <person name="Yagi K."/>
            <person name="Yamanishi H."/>
            <person name="Zabarovsky E."/>
            <person name="Zhu S."/>
            <person name="Zimmer A."/>
            <person name="Hide W."/>
            <person name="Bult C."/>
            <person name="Grimmond S.M."/>
            <person name="Teasdale R.D."/>
            <person name="Liu E.T."/>
            <person name="Brusic V."/>
            <person name="Quackenbush J."/>
            <person name="Wahlestedt C."/>
            <person name="Mattick J.S."/>
            <person name="Hume D.A."/>
            <person name="Kai C."/>
            <person name="Sasaki D."/>
            <person name="Tomaru Y."/>
            <person name="Fukuda S."/>
            <person name="Kanamori-Katayama M."/>
            <person name="Suzuki M."/>
            <person name="Aoki J."/>
            <person name="Arakawa T."/>
            <person name="Iida J."/>
            <person name="Imamura K."/>
            <person name="Itoh M."/>
            <person name="Kato T."/>
            <person name="Kawaji H."/>
            <person name="Kawagashira N."/>
            <person name="Kawashima T."/>
            <person name="Kojima M."/>
            <person name="Kondo S."/>
            <person name="Konno H."/>
            <person name="Nakano K."/>
            <person name="Ninomiya N."/>
            <person name="Nishio T."/>
            <person name="Okada M."/>
            <person name="Plessy C."/>
            <person name="Shibata K."/>
            <person name="Shiraki T."/>
            <person name="Suzuki S."/>
            <person name="Tagami M."/>
            <person name="Waki K."/>
            <person name="Watahiki A."/>
            <person name="Okamura-Oho Y."/>
            <person name="Suzuki H."/>
            <person name="Kawai J."/>
            <person name="Hayashizaki Y."/>
        </authorList>
    </citation>
    <scope>NUCLEOTIDE SEQUENCE [LARGE SCALE MRNA]</scope>
    <source>
        <strain>C57BL/6J</strain>
        <tissue>Tongue</tissue>
    </source>
</reference>
<reference key="6">
    <citation type="journal article" date="2004" name="Genome Res.">
        <title>The status, quality, and expansion of the NIH full-length cDNA project: the Mammalian Gene Collection (MGC).</title>
        <authorList>
            <consortium name="The MGC Project Team"/>
        </authorList>
    </citation>
    <scope>NUCLEOTIDE SEQUENCE [LARGE SCALE MRNA] (ISOFORM 3)</scope>
    <source>
        <strain>Czech II</strain>
        <tissue>Lung</tissue>
    </source>
</reference>
<sequence>MALKVLPLHRTVLFAAILFLLHLACKVSCETGDCRQQEFKDRSGNCVLCKQCGPGMELSKECGFGYGEDAQCVPCRPHRFKEDWGFQKCKPCADCALVNRFQRANCSHTSDAVCGDCLPGFYRKTKLVGFQDMECVPCGDPPPPYEPHCTSKVNLVKISSTVSSPRDTALAAVICSALATVLLALLILCVIYCKRQFMEKKPSWSLRSQDIQYNGSELSCFDQPRLRHCAHRACCQYHRDSAPMYGPVHLIPSLCCEEARSSARAVLGCGLRSPTTLQERNPASVGDTMPAFFGSVSRSICAEFSDAWPLMQNPLGGDSSLCDSYPELTGEDTNSLNPENESAASLDSSGGQDLAGTAALESSGNVSESTDSPRHGDTGTVWEQTLAQDAQRTPSQGGWEDRENLNLAMPTAFQDA</sequence>
<accession>Q9JLL3</accession>
<accession>Q80T13</accession>
<accession>Q812G3</accession>
<accession>Q9JHF1</accession>
<accession>Q9JJH6</accession>
<accession>Q9JLL2</accession>
<accession>Q9QXW7</accession>
<keyword id="KW-0025">Alternative splicing</keyword>
<keyword id="KW-1003">Cell membrane</keyword>
<keyword id="KW-1015">Disulfide bond</keyword>
<keyword id="KW-0325">Glycoprotein</keyword>
<keyword id="KW-0472">Membrane</keyword>
<keyword id="KW-0675">Receptor</keyword>
<keyword id="KW-1185">Reference proteome</keyword>
<keyword id="KW-0677">Repeat</keyword>
<keyword id="KW-0964">Secreted</keyword>
<keyword id="KW-0732">Signal</keyword>
<keyword id="KW-0812">Transmembrane</keyword>
<keyword id="KW-1133">Transmembrane helix</keyword>
<name>TNR19_MOUSE</name>
<gene>
    <name type="primary">Tnfrsf19</name>
    <name type="synonym">Taj</name>
    <name type="synonym">Troy</name>
</gene>
<protein>
    <recommendedName>
        <fullName>Tumor necrosis factor receptor superfamily member 19</fullName>
    </recommendedName>
    <alternativeName>
        <fullName>TRADE</fullName>
    </alternativeName>
    <alternativeName>
        <fullName>Toxicity and JNK inducer</fullName>
    </alternativeName>
</protein>
<feature type="signal peptide" evidence="2">
    <location>
        <begin position="1"/>
        <end position="29"/>
    </location>
</feature>
<feature type="chain" id="PRO_0000034598" description="Tumor necrosis factor receptor superfamily member 19">
    <location>
        <begin position="30"/>
        <end position="416"/>
    </location>
</feature>
<feature type="topological domain" description="Extracellular" evidence="2">
    <location>
        <begin position="30"/>
        <end position="170"/>
    </location>
</feature>
<feature type="transmembrane region" description="Helical" evidence="2">
    <location>
        <begin position="171"/>
        <end position="191"/>
    </location>
</feature>
<feature type="topological domain" description="Cytoplasmic" evidence="2">
    <location>
        <begin position="192"/>
        <end position="416"/>
    </location>
</feature>
<feature type="repeat" description="TNFR-Cys 1">
    <location>
        <begin position="33"/>
        <end position="72"/>
    </location>
</feature>
<feature type="repeat" description="TNFR-Cys 2">
    <location>
        <begin position="74"/>
        <end position="114"/>
    </location>
</feature>
<feature type="repeat" description="TNFR-Cys 3; truncated">
    <location>
        <begin position="116"/>
        <end position="149"/>
    </location>
</feature>
<feature type="region of interest" description="Disordered" evidence="4">
    <location>
        <begin position="321"/>
        <end position="416"/>
    </location>
</feature>
<feature type="compositionally biased region" description="Polar residues" evidence="4">
    <location>
        <begin position="331"/>
        <end position="351"/>
    </location>
</feature>
<feature type="compositionally biased region" description="Polar residues" evidence="4">
    <location>
        <begin position="360"/>
        <end position="370"/>
    </location>
</feature>
<feature type="compositionally biased region" description="Polar residues" evidence="4">
    <location>
        <begin position="381"/>
        <end position="396"/>
    </location>
</feature>
<feature type="glycosylation site" description="N-linked (GlcNAc...) asparagine" evidence="2">
    <location>
        <position position="105"/>
    </location>
</feature>
<feature type="disulfide bond" evidence="3">
    <location>
        <begin position="34"/>
        <end position="46"/>
    </location>
</feature>
<feature type="disulfide bond" evidence="3">
    <location>
        <begin position="49"/>
        <end position="62"/>
    </location>
</feature>
<feature type="disulfide bond" evidence="3">
    <location>
        <begin position="52"/>
        <end position="72"/>
    </location>
</feature>
<feature type="disulfide bond" evidence="3">
    <location>
        <begin position="75"/>
        <end position="89"/>
    </location>
</feature>
<feature type="disulfide bond" evidence="3">
    <location>
        <begin position="92"/>
        <end position="106"/>
    </location>
</feature>
<feature type="disulfide bond" evidence="3">
    <location>
        <begin position="95"/>
        <end position="114"/>
    </location>
</feature>
<feature type="disulfide bond" evidence="3">
    <location>
        <begin position="117"/>
        <end position="135"/>
    </location>
</feature>
<feature type="disulfide bond" evidence="3">
    <location>
        <begin position="138"/>
        <end position="149"/>
    </location>
</feature>
<feature type="splice variant" id="VSP_006513" description="In isoform 2." evidence="7">
    <original>T</original>
    <variation>E</variation>
    <location>
        <position position="150"/>
    </location>
</feature>
<feature type="splice variant" id="VSP_006514" description="In isoform 2." evidence="7">
    <location>
        <begin position="151"/>
        <end position="416"/>
    </location>
</feature>
<feature type="splice variant" id="VSP_006515" description="In isoform 3." evidence="6 7 8">
    <original>WSLRSQDIQYN</original>
    <variation>CKLPSLCLTVK</variation>
    <location>
        <begin position="204"/>
        <end position="214"/>
    </location>
</feature>
<feature type="splice variant" id="VSP_006516" description="In isoform 3." evidence="6 7 8">
    <location>
        <begin position="215"/>
        <end position="416"/>
    </location>
</feature>
<feature type="splice variant" id="VSP_006517" description="In isoform 4." evidence="5">
    <original>NESAASLDS</original>
    <variation>MLCFRFRDL</variation>
    <location>
        <begin position="340"/>
        <end position="348"/>
    </location>
</feature>
<feature type="splice variant" id="VSP_006518" description="In isoform 4." evidence="5">
    <location>
        <begin position="349"/>
        <end position="416"/>
    </location>
</feature>
<feature type="sequence conflict" description="In Ref. 1; AAF19795." evidence="9" ref="1">
    <original>T</original>
    <variation>A</variation>
    <location>
        <position position="31"/>
    </location>
</feature>
<feature type="sequence conflict" description="In Ref. 1; AAF19795." evidence="9" ref="1">
    <original>S</original>
    <variation>P</variation>
    <location>
        <position position="208"/>
    </location>
</feature>
<feature type="sequence conflict" description="In Ref. 1; AAF19795 and 2; AAF71825." evidence="9" ref="1 2">
    <original>D</original>
    <variation>N</variation>
    <location>
        <position position="287"/>
    </location>
</feature>
<feature type="sequence conflict" description="In Ref. 2; AAF71825." evidence="9" ref="2">
    <original>A</original>
    <variation>T</variation>
    <location>
        <position position="343"/>
    </location>
</feature>
<comment type="function">
    <text evidence="1">Can mediate activation of c-Jun and NF-kappa-B. May promote caspase-independent cell death (By similarity). Isoform 2 and isoform 3 may act as decoy receptors.</text>
</comment>
<comment type="subunit">
    <text evidence="1">Associates with TRAF1, TRAF2, TRAF3 and TRAF5. Interacts with LINGO1.</text>
</comment>
<comment type="interaction">
    <interactant intactId="EBI-20800437">
        <id>Q9JLL3</id>
    </interactant>
    <interactant intactId="EBI-716384">
        <id>P30086</id>
        <label>PEBP1</label>
    </interactant>
    <organismsDiffer>true</organismsDiffer>
    <experiments>4</experiments>
</comment>
<comment type="interaction">
    <interactant intactId="EBI-20800437">
        <id>Q9JLL3</id>
    </interactant>
    <interactant intactId="EBI-354213">
        <id>P35232</id>
        <label>PHB1</label>
    </interactant>
    <organismsDiffer>true</organismsDiffer>
    <experiments>3</experiments>
</comment>
<comment type="subcellular location">
    <molecule>Isoform 1</molecule>
    <subcellularLocation>
        <location evidence="9">Cell membrane</location>
        <topology evidence="9">Single-pass type I membrane protein</topology>
    </subcellularLocation>
</comment>
<comment type="subcellular location">
    <molecule>Isoform 3</molecule>
    <subcellularLocation>
        <location evidence="9">Cell membrane</location>
        <topology evidence="9">Single-pass type I membrane protein</topology>
    </subcellularLocation>
</comment>
<comment type="subcellular location">
    <molecule>Isoform 4</molecule>
    <subcellularLocation>
        <location evidence="9">Cell membrane</location>
        <topology evidence="9">Single-pass type I membrane protein</topology>
    </subcellularLocation>
</comment>
<comment type="subcellular location">
    <molecule>Isoform 2</molecule>
    <subcellularLocation>
        <location evidence="9">Secreted</location>
    </subcellularLocation>
</comment>
<comment type="alternative products">
    <event type="alternative splicing"/>
    <isoform>
        <id>Q9JLL3-1</id>
        <name>1</name>
        <name>TAJ-alphaL</name>
        <sequence type="displayed"/>
    </isoform>
    <isoform>
        <id>Q9JLL3-2</id>
        <name>2</name>
        <name>TAJ-beta1</name>
        <sequence type="described" ref="VSP_006513 VSP_006514"/>
    </isoform>
    <isoform>
        <id>Q9JLL3-3</id>
        <name>3</name>
        <name>TAJ-alphaS</name>
        <name>dTROY</name>
        <sequence type="described" ref="VSP_006515 VSP_006516"/>
    </isoform>
    <isoform>
        <id>Q9JLL3-4</id>
        <name>4</name>
        <sequence type="described" ref="VSP_006517 VSP_006518"/>
    </isoform>
</comment>
<comment type="tissue specificity">
    <text>Highly expressed in adult brain, and in embryos from day 11-17, but not earlier. Detected in embryonic brain and epithelium, and at lower levels in adult heart, lung and liver. In neonatal mice, mainly in hair follicles and neuron-like cells in the cerebellum, but not in the skin epidermis. Isoform 3 was found in embryonic day 17.5 skin but not in brain and liver.</text>
</comment>